<proteinExistence type="evidence at transcript level"/>
<keyword id="KW-0068">Autocatalytic cleavage</keyword>
<keyword id="KW-0325">Glycoprotein</keyword>
<keyword id="KW-0378">Hydrolase</keyword>
<keyword id="KW-0645">Protease</keyword>
<keyword id="KW-1185">Reference proteome</keyword>
<keyword id="KW-0964">Secreted</keyword>
<keyword id="KW-0720">Serine protease</keyword>
<keyword id="KW-0732">Signal</keyword>
<keyword id="KW-0865">Zymogen</keyword>
<dbReference type="EC" id="3.4.21.-" evidence="6"/>
<dbReference type="EMBL" id="AB016885">
    <property type="protein sequence ID" value="BAB09629.1"/>
    <property type="molecule type" value="Genomic_DNA"/>
</dbReference>
<dbReference type="EMBL" id="CP002688">
    <property type="protein sequence ID" value="AED97109.1"/>
    <property type="molecule type" value="Genomic_DNA"/>
</dbReference>
<dbReference type="EMBL" id="BT008543">
    <property type="protein sequence ID" value="AAP40370.1"/>
    <property type="molecule type" value="mRNA"/>
</dbReference>
<dbReference type="EMBL" id="BT008659">
    <property type="protein sequence ID" value="AAP40471.1"/>
    <property type="molecule type" value="mRNA"/>
</dbReference>
<dbReference type="EMBL" id="AK229679">
    <property type="protein sequence ID" value="BAF01520.1"/>
    <property type="molecule type" value="mRNA"/>
</dbReference>
<dbReference type="RefSeq" id="NP_568890.2">
    <property type="nucleotide sequence ID" value="NM_125274.3"/>
</dbReference>
<dbReference type="SMR" id="Q9FIM5"/>
<dbReference type="FunCoup" id="Q9FIM5">
    <property type="interactions" value="1"/>
</dbReference>
<dbReference type="STRING" id="3702.Q9FIM5"/>
<dbReference type="MEROPS" id="S08.A07"/>
<dbReference type="GlyCosmos" id="Q9FIM5">
    <property type="glycosylation" value="8 sites, No reported glycans"/>
</dbReference>
<dbReference type="GlyGen" id="Q9FIM5">
    <property type="glycosylation" value="8 sites"/>
</dbReference>
<dbReference type="iPTMnet" id="Q9FIM5"/>
<dbReference type="PaxDb" id="3702-AT5G58840.1"/>
<dbReference type="ProteomicsDB" id="226650"/>
<dbReference type="EnsemblPlants" id="AT5G58840.1">
    <property type="protein sequence ID" value="AT5G58840.1"/>
    <property type="gene ID" value="AT5G58840"/>
</dbReference>
<dbReference type="GeneID" id="836001"/>
<dbReference type="Gramene" id="AT5G58840.1">
    <property type="protein sequence ID" value="AT5G58840.1"/>
    <property type="gene ID" value="AT5G58840"/>
</dbReference>
<dbReference type="KEGG" id="ath:AT5G58840"/>
<dbReference type="Araport" id="AT5G58840"/>
<dbReference type="TAIR" id="AT5G58840"/>
<dbReference type="eggNOG" id="ENOG502QRA7">
    <property type="taxonomic scope" value="Eukaryota"/>
</dbReference>
<dbReference type="HOGENOM" id="CLU_000625_4_3_1"/>
<dbReference type="InParanoid" id="Q9FIM5"/>
<dbReference type="OMA" id="GSHNCIV"/>
<dbReference type="PhylomeDB" id="Q9FIM5"/>
<dbReference type="PRO" id="PR:Q9FIM5"/>
<dbReference type="Proteomes" id="UP000006548">
    <property type="component" value="Chromosome 5"/>
</dbReference>
<dbReference type="ExpressionAtlas" id="Q9FIM5">
    <property type="expression patterns" value="baseline and differential"/>
</dbReference>
<dbReference type="GO" id="GO:0005576">
    <property type="term" value="C:extracellular region"/>
    <property type="evidence" value="ECO:0007669"/>
    <property type="project" value="UniProtKB-SubCell"/>
</dbReference>
<dbReference type="GO" id="GO:0004252">
    <property type="term" value="F:serine-type endopeptidase activity"/>
    <property type="evidence" value="ECO:0007669"/>
    <property type="project" value="InterPro"/>
</dbReference>
<dbReference type="GO" id="GO:0006508">
    <property type="term" value="P:proteolysis"/>
    <property type="evidence" value="ECO:0007669"/>
    <property type="project" value="UniProtKB-KW"/>
</dbReference>
<dbReference type="CDD" id="cd04852">
    <property type="entry name" value="Peptidases_S8_3"/>
    <property type="match status" value="1"/>
</dbReference>
<dbReference type="FunFam" id="3.30.70.80:FF:000002">
    <property type="entry name" value="Subtilisin-like protease SBT5.3"/>
    <property type="match status" value="1"/>
</dbReference>
<dbReference type="Gene3D" id="2.60.40.2310">
    <property type="match status" value="1"/>
</dbReference>
<dbReference type="Gene3D" id="3.50.30.30">
    <property type="match status" value="1"/>
</dbReference>
<dbReference type="Gene3D" id="3.30.70.80">
    <property type="entry name" value="Peptidase S8 propeptide/proteinase inhibitor I9"/>
    <property type="match status" value="1"/>
</dbReference>
<dbReference type="Gene3D" id="3.40.50.200">
    <property type="entry name" value="Peptidase S8/S53 domain"/>
    <property type="match status" value="1"/>
</dbReference>
<dbReference type="InterPro" id="IPR000209">
    <property type="entry name" value="Peptidase_S8/S53_dom"/>
</dbReference>
<dbReference type="InterPro" id="IPR036852">
    <property type="entry name" value="Peptidase_S8/S53_dom_sf"/>
</dbReference>
<dbReference type="InterPro" id="IPR023828">
    <property type="entry name" value="Peptidase_S8_Ser-AS"/>
</dbReference>
<dbReference type="InterPro" id="IPR015500">
    <property type="entry name" value="Peptidase_S8_subtilisin-rel"/>
</dbReference>
<dbReference type="InterPro" id="IPR034197">
    <property type="entry name" value="Peptidases_S8_3"/>
</dbReference>
<dbReference type="InterPro" id="IPR010259">
    <property type="entry name" value="S8pro/Inhibitor_I9"/>
</dbReference>
<dbReference type="InterPro" id="IPR037045">
    <property type="entry name" value="S8pro/Inhibitor_I9_sf"/>
</dbReference>
<dbReference type="InterPro" id="IPR045051">
    <property type="entry name" value="SBT"/>
</dbReference>
<dbReference type="InterPro" id="IPR041469">
    <property type="entry name" value="Subtilisin-like_FN3"/>
</dbReference>
<dbReference type="PANTHER" id="PTHR10795">
    <property type="entry name" value="PROPROTEIN CONVERTASE SUBTILISIN/KEXIN"/>
    <property type="match status" value="1"/>
</dbReference>
<dbReference type="Pfam" id="PF17766">
    <property type="entry name" value="fn3_6"/>
    <property type="match status" value="1"/>
</dbReference>
<dbReference type="Pfam" id="PF05922">
    <property type="entry name" value="Inhibitor_I9"/>
    <property type="match status" value="1"/>
</dbReference>
<dbReference type="Pfam" id="PF00082">
    <property type="entry name" value="Peptidase_S8"/>
    <property type="match status" value="1"/>
</dbReference>
<dbReference type="PRINTS" id="PR00723">
    <property type="entry name" value="SUBTILISIN"/>
</dbReference>
<dbReference type="SUPFAM" id="SSF52743">
    <property type="entry name" value="Subtilisin-like"/>
    <property type="match status" value="1"/>
</dbReference>
<dbReference type="PROSITE" id="PS51892">
    <property type="entry name" value="SUBTILASE"/>
    <property type="match status" value="1"/>
</dbReference>
<dbReference type="PROSITE" id="PS00138">
    <property type="entry name" value="SUBTILASE_SER"/>
    <property type="match status" value="1"/>
</dbReference>
<organism>
    <name type="scientific">Arabidopsis thaliana</name>
    <name type="common">Mouse-ear cress</name>
    <dbReference type="NCBI Taxonomy" id="3702"/>
    <lineage>
        <taxon>Eukaryota</taxon>
        <taxon>Viridiplantae</taxon>
        <taxon>Streptophyta</taxon>
        <taxon>Embryophyta</taxon>
        <taxon>Tracheophyta</taxon>
        <taxon>Spermatophyta</taxon>
        <taxon>Magnoliopsida</taxon>
        <taxon>eudicotyledons</taxon>
        <taxon>Gunneridae</taxon>
        <taxon>Pentapetalae</taxon>
        <taxon>rosids</taxon>
        <taxon>malvids</taxon>
        <taxon>Brassicales</taxon>
        <taxon>Brassicaceae</taxon>
        <taxon>Camelineae</taxon>
        <taxon>Arabidopsis</taxon>
    </lineage>
</organism>
<evidence type="ECO:0000250" key="1">
    <source>
        <dbReference type="UniProtKB" id="Q39547"/>
    </source>
</evidence>
<evidence type="ECO:0000250" key="2">
    <source>
        <dbReference type="UniProtKB" id="Q84WS0"/>
    </source>
</evidence>
<evidence type="ECO:0000255" key="3"/>
<evidence type="ECO:0000255" key="4">
    <source>
        <dbReference type="PROSITE-ProRule" id="PRU00498"/>
    </source>
</evidence>
<evidence type="ECO:0000255" key="5">
    <source>
        <dbReference type="PROSITE-ProRule" id="PRU01240"/>
    </source>
</evidence>
<evidence type="ECO:0000255" key="6">
    <source>
        <dbReference type="PROSITE-ProRule" id="PRU10082"/>
    </source>
</evidence>
<evidence type="ECO:0000303" key="7">
    <source>
    </source>
</evidence>
<evidence type="ECO:0000305" key="8"/>
<evidence type="ECO:0000312" key="9">
    <source>
        <dbReference type="Araport" id="AT5G58840"/>
    </source>
</evidence>
<evidence type="ECO:0000312" key="10">
    <source>
        <dbReference type="EMBL" id="BAB09629.1"/>
    </source>
</evidence>
<reference key="1">
    <citation type="journal article" date="1998" name="DNA Res.">
        <title>Structural analysis of Arabidopsis thaliana chromosome 5. VIII. Sequence features of the regions of 1,081,958 bp covered by seventeen physically assigned P1 and TAC clones.</title>
        <authorList>
            <person name="Asamizu E."/>
            <person name="Sato S."/>
            <person name="Kaneko T."/>
            <person name="Nakamura Y."/>
            <person name="Kotani H."/>
            <person name="Miyajima N."/>
            <person name="Tabata S."/>
        </authorList>
    </citation>
    <scope>NUCLEOTIDE SEQUENCE [LARGE SCALE GENOMIC DNA]</scope>
    <source>
        <strain>cv. Columbia</strain>
    </source>
</reference>
<reference key="2">
    <citation type="journal article" date="2017" name="Plant J.">
        <title>Araport11: a complete reannotation of the Arabidopsis thaliana reference genome.</title>
        <authorList>
            <person name="Cheng C.Y."/>
            <person name="Krishnakumar V."/>
            <person name="Chan A.P."/>
            <person name="Thibaud-Nissen F."/>
            <person name="Schobel S."/>
            <person name="Town C.D."/>
        </authorList>
    </citation>
    <scope>GENOME REANNOTATION</scope>
    <source>
        <strain>cv. Columbia</strain>
    </source>
</reference>
<reference key="3">
    <citation type="journal article" date="2003" name="Science">
        <title>Empirical analysis of transcriptional activity in the Arabidopsis genome.</title>
        <authorList>
            <person name="Yamada K."/>
            <person name="Lim J."/>
            <person name="Dale J.M."/>
            <person name="Chen H."/>
            <person name="Shinn P."/>
            <person name="Palm C.J."/>
            <person name="Southwick A.M."/>
            <person name="Wu H.C."/>
            <person name="Kim C.J."/>
            <person name="Nguyen M."/>
            <person name="Pham P.K."/>
            <person name="Cheuk R.F."/>
            <person name="Karlin-Newmann G."/>
            <person name="Liu S.X."/>
            <person name="Lam B."/>
            <person name="Sakano H."/>
            <person name="Wu T."/>
            <person name="Yu G."/>
            <person name="Miranda M."/>
            <person name="Quach H.L."/>
            <person name="Tripp M."/>
            <person name="Chang C.H."/>
            <person name="Lee J.M."/>
            <person name="Toriumi M.J."/>
            <person name="Chan M.M."/>
            <person name="Tang C.C."/>
            <person name="Onodera C.S."/>
            <person name="Deng J.M."/>
            <person name="Akiyama K."/>
            <person name="Ansari Y."/>
            <person name="Arakawa T."/>
            <person name="Banh J."/>
            <person name="Banno F."/>
            <person name="Bowser L."/>
            <person name="Brooks S.Y."/>
            <person name="Carninci P."/>
            <person name="Chao Q."/>
            <person name="Choy N."/>
            <person name="Enju A."/>
            <person name="Goldsmith A.D."/>
            <person name="Gurjal M."/>
            <person name="Hansen N.F."/>
            <person name="Hayashizaki Y."/>
            <person name="Johnson-Hopson C."/>
            <person name="Hsuan V.W."/>
            <person name="Iida K."/>
            <person name="Karnes M."/>
            <person name="Khan S."/>
            <person name="Koesema E."/>
            <person name="Ishida J."/>
            <person name="Jiang P.X."/>
            <person name="Jones T."/>
            <person name="Kawai J."/>
            <person name="Kamiya A."/>
            <person name="Meyers C."/>
            <person name="Nakajima M."/>
            <person name="Narusaka M."/>
            <person name="Seki M."/>
            <person name="Sakurai T."/>
            <person name="Satou M."/>
            <person name="Tamse R."/>
            <person name="Vaysberg M."/>
            <person name="Wallender E.K."/>
            <person name="Wong C."/>
            <person name="Yamamura Y."/>
            <person name="Yuan S."/>
            <person name="Shinozaki K."/>
            <person name="Davis R.W."/>
            <person name="Theologis A."/>
            <person name="Ecker J.R."/>
        </authorList>
    </citation>
    <scope>NUCLEOTIDE SEQUENCE [LARGE SCALE MRNA]</scope>
    <source>
        <strain>cv. Columbia</strain>
    </source>
</reference>
<reference key="4">
    <citation type="submission" date="2006-07" db="EMBL/GenBank/DDBJ databases">
        <title>Large-scale analysis of RIKEN Arabidopsis full-length (RAFL) cDNAs.</title>
        <authorList>
            <person name="Totoki Y."/>
            <person name="Seki M."/>
            <person name="Ishida J."/>
            <person name="Nakajima M."/>
            <person name="Enju A."/>
            <person name="Kamiya A."/>
            <person name="Narusaka M."/>
            <person name="Shin-i T."/>
            <person name="Nakagawa M."/>
            <person name="Sakamoto N."/>
            <person name="Oishi K."/>
            <person name="Kohara Y."/>
            <person name="Kobayashi M."/>
            <person name="Toyoda A."/>
            <person name="Sakaki Y."/>
            <person name="Sakurai T."/>
            <person name="Iida K."/>
            <person name="Akiyama K."/>
            <person name="Satou M."/>
            <person name="Toyoda T."/>
            <person name="Konagaya A."/>
            <person name="Carninci P."/>
            <person name="Kawai J."/>
            <person name="Hayashizaki Y."/>
            <person name="Shinozaki K."/>
        </authorList>
    </citation>
    <scope>NUCLEOTIDE SEQUENCE [LARGE SCALE MRNA]</scope>
    <source>
        <strain>cv. Columbia</strain>
    </source>
</reference>
<reference key="5">
    <citation type="journal article" date="2005" name="PLoS Comput. Biol.">
        <title>Inferring hypotheses on functional relationships of genes: Analysis of the Arabidopsis thaliana subtilase gene family.</title>
        <authorList>
            <person name="Rautengarten C."/>
            <person name="Steinhauser D."/>
            <person name="Bussis D."/>
            <person name="Stintzi A."/>
            <person name="Schaller A."/>
            <person name="Kopka J."/>
            <person name="Altmann T."/>
        </authorList>
    </citation>
    <scope>GENE FAMILY</scope>
    <scope>NOMENCLATURE</scope>
</reference>
<name>SBT49_ARATH</name>
<accession>Q9FIM5</accession>
<feature type="signal peptide" evidence="3">
    <location>
        <begin position="1"/>
        <end position="24"/>
    </location>
</feature>
<feature type="propeptide" id="PRO_0000435242" description="Activation peptide" evidence="1">
    <location>
        <begin position="25"/>
        <end position="113"/>
    </location>
</feature>
<feature type="chain" id="PRO_5004326411" description="Subtilisin-like protease SBT4.9" evidence="3">
    <location>
        <begin position="114"/>
        <end status="unknown"/>
    </location>
</feature>
<feature type="propeptide" id="PRO_0000435243" evidence="1">
    <location>
        <begin status="unknown"/>
        <end position="713"/>
    </location>
</feature>
<feature type="domain" description="Inhibitor I9" evidence="3">
    <location>
        <begin position="34"/>
        <end position="112"/>
    </location>
</feature>
<feature type="domain" description="Peptidase S8" evidence="5">
    <location>
        <begin position="117"/>
        <end position="560"/>
    </location>
</feature>
<feature type="domain" description="PA" evidence="3">
    <location>
        <begin position="356"/>
        <end position="415"/>
    </location>
</feature>
<feature type="active site" description="Charge relay system" evidence="5">
    <location>
        <position position="145"/>
    </location>
</feature>
<feature type="active site" description="Charge relay system" evidence="5">
    <location>
        <position position="200"/>
    </location>
</feature>
<feature type="active site" description="Charge relay system" evidence="5">
    <location>
        <position position="499"/>
    </location>
</feature>
<feature type="glycosylation site" description="N-linked (GlcNAc...) asparagine" evidence="4">
    <location>
        <position position="176"/>
    </location>
</feature>
<feature type="glycosylation site" description="N-linked (GlcNAc...) asparagine" evidence="4">
    <location>
        <position position="215"/>
    </location>
</feature>
<feature type="glycosylation site" description="N-linked (GlcNAc...) asparagine" evidence="4">
    <location>
        <position position="223"/>
    </location>
</feature>
<feature type="glycosylation site" description="N-linked (GlcNAc...) asparagine" evidence="4">
    <location>
        <position position="420"/>
    </location>
</feature>
<feature type="glycosylation site" description="N-linked (GlcNAc...) asparagine" evidence="4">
    <location>
        <position position="536"/>
    </location>
</feature>
<feature type="glycosylation site" description="N-linked (GlcNAc...) asparagine" evidence="4">
    <location>
        <position position="583"/>
    </location>
</feature>
<feature type="glycosylation site" description="N-linked (GlcNAc...) asparagine" evidence="4">
    <location>
        <position position="627"/>
    </location>
</feature>
<feature type="glycosylation site" description="N-linked (GlcNAc...) asparagine" evidence="4">
    <location>
        <position position="637"/>
    </location>
</feature>
<comment type="subcellular location">
    <subcellularLocation>
        <location evidence="2">Secreted</location>
    </subcellularLocation>
</comment>
<comment type="PTM">
    <text evidence="1">The C-terminal propeptide is autocleaved.</text>
</comment>
<comment type="similarity">
    <text evidence="8">Belongs to the peptidase S8 family.</text>
</comment>
<protein>
    <recommendedName>
        <fullName evidence="7">Subtilisin-like protease SBT4.9</fullName>
        <ecNumber evidence="6">3.4.21.-</ecNumber>
    </recommendedName>
    <alternativeName>
        <fullName evidence="7">Subtilase subfamily 4 member 9</fullName>
        <shortName evidence="7">AtSBT4.9</shortName>
    </alternativeName>
</protein>
<sequence>MARRADSFCLISCVLVSFVISVSAVTDDSQDKQVYVVYMGSLPSSRLEYTPMSHHMSILQEVTGESSVEGRLVRSYKRSFNGFAARLTESERERVAEMEGVVSVFPDINYKLQTTASWDFLGLKEGKNTKRNLAIESDTIIGFIDSGIWPESESFSDKGFGPPPKKWKGVCSAGKNFTCNNKLIGARDYTNEGTRDIEGHGTHTASTAAGNAVKNTSFYGIGNGTARGGVPASRIAAYKACSEMGCTTESVLSAFDDAIADGVDLISISLGANLVRTYETDPIAIGAFHAMVKGILTVQSAGNGGPNPGSVMSVAPWILTVAASNTNRGFVTKVVLGNGKTFVGKSLNAFDLKGKNYPLYGGSTDGPLLRGKILVSEDKVSSEIVVANINENYHDYAYVSILPSSALSKDDFDSVISYVNSTKSPHGTVLKSEAIFNQAAPKVAGFSSRGPNTIAVDILKPDVTAPGVEILAAFSPLNSPAQDKRDNRHVKYSVLSGTSMSCPHVAGVAAYIKTFHPEWSPSMIQSAIMTTAWPMNATGTAVASTEFAYGAGHVDPIAAINPGLVYEIGKSDHIAFLCGLNYNATSLKLIAGEAVTCTGKTLPRNLNYPSMSAKLPKSESSFIVTFNRTVTNVGTPNSTYKSKIVLNHGSNLKVEVSPSVLSMKSVKEKQSFTVTVSGSNIDPKLPSSANLIWSDGTHNVRSPIVVYTYSVSD</sequence>
<gene>
    <name evidence="7" type="primary">SBT4.9</name>
    <name evidence="9" type="ordered locus">At5g58840</name>
    <name evidence="10" type="ORF">K19M22.4</name>
</gene>